<organism>
    <name type="scientific">Bordetella pertussis (strain Tohama I / ATCC BAA-589 / NCTC 13251)</name>
    <dbReference type="NCBI Taxonomy" id="257313"/>
    <lineage>
        <taxon>Bacteria</taxon>
        <taxon>Pseudomonadati</taxon>
        <taxon>Pseudomonadota</taxon>
        <taxon>Betaproteobacteria</taxon>
        <taxon>Burkholderiales</taxon>
        <taxon>Alcaligenaceae</taxon>
        <taxon>Bordetella</taxon>
    </lineage>
</organism>
<proteinExistence type="inferred from homology"/>
<evidence type="ECO:0000255" key="1">
    <source>
        <dbReference type="HAMAP-Rule" id="MF_01333"/>
    </source>
</evidence>
<evidence type="ECO:0000305" key="2"/>
<name>RL5_BORPE</name>
<accession>Q7VTB9</accession>
<reference key="1">
    <citation type="journal article" date="2003" name="Nat. Genet.">
        <title>Comparative analysis of the genome sequences of Bordetella pertussis, Bordetella parapertussis and Bordetella bronchiseptica.</title>
        <authorList>
            <person name="Parkhill J."/>
            <person name="Sebaihia M."/>
            <person name="Preston A."/>
            <person name="Murphy L.D."/>
            <person name="Thomson N.R."/>
            <person name="Harris D.E."/>
            <person name="Holden M.T.G."/>
            <person name="Churcher C.M."/>
            <person name="Bentley S.D."/>
            <person name="Mungall K.L."/>
            <person name="Cerdeno-Tarraga A.-M."/>
            <person name="Temple L."/>
            <person name="James K.D."/>
            <person name="Harris B."/>
            <person name="Quail M.A."/>
            <person name="Achtman M."/>
            <person name="Atkin R."/>
            <person name="Baker S."/>
            <person name="Basham D."/>
            <person name="Bason N."/>
            <person name="Cherevach I."/>
            <person name="Chillingworth T."/>
            <person name="Collins M."/>
            <person name="Cronin A."/>
            <person name="Davis P."/>
            <person name="Doggett J."/>
            <person name="Feltwell T."/>
            <person name="Goble A."/>
            <person name="Hamlin N."/>
            <person name="Hauser H."/>
            <person name="Holroyd S."/>
            <person name="Jagels K."/>
            <person name="Leather S."/>
            <person name="Moule S."/>
            <person name="Norberczak H."/>
            <person name="O'Neil S."/>
            <person name="Ormond D."/>
            <person name="Price C."/>
            <person name="Rabbinowitsch E."/>
            <person name="Rutter S."/>
            <person name="Sanders M."/>
            <person name="Saunders D."/>
            <person name="Seeger K."/>
            <person name="Sharp S."/>
            <person name="Simmonds M."/>
            <person name="Skelton J."/>
            <person name="Squares R."/>
            <person name="Squares S."/>
            <person name="Stevens K."/>
            <person name="Unwin L."/>
            <person name="Whitehead S."/>
            <person name="Barrell B.G."/>
            <person name="Maskell D.J."/>
        </authorList>
    </citation>
    <scope>NUCLEOTIDE SEQUENCE [LARGE SCALE GENOMIC DNA]</scope>
    <source>
        <strain>Tohama I / ATCC BAA-589 / NCTC 13251</strain>
    </source>
</reference>
<sequence>MSRLQEFYKSKVVADLQAKFGYKCVMEVPRITKITLNMGVSEAVADKKVIEHAVSDLTKISGQKPVVTKTRKAIAGFKIRENYPIGCMVTLRGQRMYEFLDRLVAVALPRVRDFRGISGRAFDGRGNYNIGVKEQIIFPEIEYDKIDALRGLNISITTTAKTDDEAKALLTAFSFPFRN</sequence>
<comment type="function">
    <text evidence="1">This is one of the proteins that bind and probably mediate the attachment of the 5S RNA into the large ribosomal subunit, where it forms part of the central protuberance. In the 70S ribosome it contacts protein S13 of the 30S subunit (bridge B1b), connecting the 2 subunits; this bridge is implicated in subunit movement. Contacts the P site tRNA; the 5S rRNA and some of its associated proteins might help stabilize positioning of ribosome-bound tRNAs.</text>
</comment>
<comment type="subunit">
    <text evidence="1">Part of the 50S ribosomal subunit; part of the 5S rRNA/L5/L18/L25 subcomplex. Contacts the 5S rRNA and the P site tRNA. Forms a bridge to the 30S subunit in the 70S ribosome.</text>
</comment>
<comment type="similarity">
    <text evidence="1">Belongs to the universal ribosomal protein uL5 family.</text>
</comment>
<keyword id="KW-1185">Reference proteome</keyword>
<keyword id="KW-0687">Ribonucleoprotein</keyword>
<keyword id="KW-0689">Ribosomal protein</keyword>
<keyword id="KW-0694">RNA-binding</keyword>
<keyword id="KW-0699">rRNA-binding</keyword>
<keyword id="KW-0820">tRNA-binding</keyword>
<gene>
    <name evidence="1" type="primary">rplE</name>
    <name type="ordered locus">BP3628</name>
</gene>
<protein>
    <recommendedName>
        <fullName evidence="1">Large ribosomal subunit protein uL5</fullName>
    </recommendedName>
    <alternativeName>
        <fullName evidence="2">50S ribosomal protein L5</fullName>
    </alternativeName>
</protein>
<dbReference type="EMBL" id="BX640422">
    <property type="protein sequence ID" value="CAE43885.1"/>
    <property type="molecule type" value="Genomic_DNA"/>
</dbReference>
<dbReference type="RefSeq" id="NP_882137.1">
    <property type="nucleotide sequence ID" value="NC_002929.2"/>
</dbReference>
<dbReference type="RefSeq" id="WP_003806918.1">
    <property type="nucleotide sequence ID" value="NZ_CP039022.1"/>
</dbReference>
<dbReference type="SMR" id="Q7VTB9"/>
<dbReference type="STRING" id="257313.BP3628"/>
<dbReference type="PaxDb" id="257313-BP3628"/>
<dbReference type="GeneID" id="93206273"/>
<dbReference type="KEGG" id="bpe:BP3628"/>
<dbReference type="PATRIC" id="fig|257313.5.peg.3925"/>
<dbReference type="eggNOG" id="COG0094">
    <property type="taxonomic scope" value="Bacteria"/>
</dbReference>
<dbReference type="HOGENOM" id="CLU_061015_2_1_4"/>
<dbReference type="Proteomes" id="UP000002676">
    <property type="component" value="Chromosome"/>
</dbReference>
<dbReference type="GO" id="GO:1990904">
    <property type="term" value="C:ribonucleoprotein complex"/>
    <property type="evidence" value="ECO:0007669"/>
    <property type="project" value="UniProtKB-KW"/>
</dbReference>
<dbReference type="GO" id="GO:0005840">
    <property type="term" value="C:ribosome"/>
    <property type="evidence" value="ECO:0007669"/>
    <property type="project" value="UniProtKB-KW"/>
</dbReference>
<dbReference type="GO" id="GO:0019843">
    <property type="term" value="F:rRNA binding"/>
    <property type="evidence" value="ECO:0007669"/>
    <property type="project" value="UniProtKB-UniRule"/>
</dbReference>
<dbReference type="GO" id="GO:0003735">
    <property type="term" value="F:structural constituent of ribosome"/>
    <property type="evidence" value="ECO:0007669"/>
    <property type="project" value="InterPro"/>
</dbReference>
<dbReference type="GO" id="GO:0000049">
    <property type="term" value="F:tRNA binding"/>
    <property type="evidence" value="ECO:0007669"/>
    <property type="project" value="UniProtKB-UniRule"/>
</dbReference>
<dbReference type="GO" id="GO:0006412">
    <property type="term" value="P:translation"/>
    <property type="evidence" value="ECO:0007669"/>
    <property type="project" value="UniProtKB-UniRule"/>
</dbReference>
<dbReference type="FunFam" id="3.30.1440.10:FF:000001">
    <property type="entry name" value="50S ribosomal protein L5"/>
    <property type="match status" value="1"/>
</dbReference>
<dbReference type="Gene3D" id="3.30.1440.10">
    <property type="match status" value="1"/>
</dbReference>
<dbReference type="HAMAP" id="MF_01333_B">
    <property type="entry name" value="Ribosomal_uL5_B"/>
    <property type="match status" value="1"/>
</dbReference>
<dbReference type="InterPro" id="IPR002132">
    <property type="entry name" value="Ribosomal_uL5"/>
</dbReference>
<dbReference type="InterPro" id="IPR020930">
    <property type="entry name" value="Ribosomal_uL5_bac-type"/>
</dbReference>
<dbReference type="InterPro" id="IPR031309">
    <property type="entry name" value="Ribosomal_uL5_C"/>
</dbReference>
<dbReference type="InterPro" id="IPR020929">
    <property type="entry name" value="Ribosomal_uL5_CS"/>
</dbReference>
<dbReference type="InterPro" id="IPR022803">
    <property type="entry name" value="Ribosomal_uL5_dom_sf"/>
</dbReference>
<dbReference type="InterPro" id="IPR031310">
    <property type="entry name" value="Ribosomal_uL5_N"/>
</dbReference>
<dbReference type="NCBIfam" id="NF000585">
    <property type="entry name" value="PRK00010.1"/>
    <property type="match status" value="1"/>
</dbReference>
<dbReference type="PANTHER" id="PTHR11994">
    <property type="entry name" value="60S RIBOSOMAL PROTEIN L11-RELATED"/>
    <property type="match status" value="1"/>
</dbReference>
<dbReference type="Pfam" id="PF00281">
    <property type="entry name" value="Ribosomal_L5"/>
    <property type="match status" value="1"/>
</dbReference>
<dbReference type="Pfam" id="PF00673">
    <property type="entry name" value="Ribosomal_L5_C"/>
    <property type="match status" value="1"/>
</dbReference>
<dbReference type="PIRSF" id="PIRSF002161">
    <property type="entry name" value="Ribosomal_L5"/>
    <property type="match status" value="1"/>
</dbReference>
<dbReference type="SUPFAM" id="SSF55282">
    <property type="entry name" value="RL5-like"/>
    <property type="match status" value="1"/>
</dbReference>
<dbReference type="PROSITE" id="PS00358">
    <property type="entry name" value="RIBOSOMAL_L5"/>
    <property type="match status" value="1"/>
</dbReference>
<feature type="chain" id="PRO_0000124899" description="Large ribosomal subunit protein uL5">
    <location>
        <begin position="1"/>
        <end position="179"/>
    </location>
</feature>